<reference key="1">
    <citation type="journal article" date="2003" name="Nature">
        <title>The genome of a motile marine Synechococcus.</title>
        <authorList>
            <person name="Palenik B."/>
            <person name="Brahamsha B."/>
            <person name="Larimer F.W."/>
            <person name="Land M.L."/>
            <person name="Hauser L."/>
            <person name="Chain P."/>
            <person name="Lamerdin J.E."/>
            <person name="Regala W."/>
            <person name="Allen E.E."/>
            <person name="McCarren J."/>
            <person name="Paulsen I.T."/>
            <person name="Dufresne A."/>
            <person name="Partensky F."/>
            <person name="Webb E.A."/>
            <person name="Waterbury J."/>
        </authorList>
    </citation>
    <scope>NUCLEOTIDE SEQUENCE [LARGE SCALE GENOMIC DNA]</scope>
    <source>
        <strain>WH8102</strain>
    </source>
</reference>
<sequence>MSRRNAAEKRPVLPDPQFNSRLATMMVSRLMQHGKKSTAQRILSDAFGLINERTGGDPLELFETAVKNATPLVEVRARRVGGATYQVPMEVRQERGTAMALRWLVSFSRARNGRSMAQKLAGELMDAANEAGSAVRKREETHKMAEANKAFAHYRY</sequence>
<name>RS7_PARMW</name>
<organism>
    <name type="scientific">Parasynechococcus marenigrum (strain WH8102)</name>
    <dbReference type="NCBI Taxonomy" id="84588"/>
    <lineage>
        <taxon>Bacteria</taxon>
        <taxon>Bacillati</taxon>
        <taxon>Cyanobacteriota</taxon>
        <taxon>Cyanophyceae</taxon>
        <taxon>Synechococcales</taxon>
        <taxon>Prochlorococcaceae</taxon>
        <taxon>Parasynechococcus</taxon>
        <taxon>Parasynechococcus marenigrum</taxon>
    </lineage>
</organism>
<dbReference type="EMBL" id="BX569694">
    <property type="protein sequence ID" value="CAE08651.1"/>
    <property type="molecule type" value="Genomic_DNA"/>
</dbReference>
<dbReference type="RefSeq" id="WP_011128992.1">
    <property type="nucleotide sequence ID" value="NC_005070.1"/>
</dbReference>
<dbReference type="SMR" id="Q7U4D3"/>
<dbReference type="STRING" id="84588.SYNW2136"/>
<dbReference type="KEGG" id="syw:SYNW2136"/>
<dbReference type="eggNOG" id="COG0049">
    <property type="taxonomic scope" value="Bacteria"/>
</dbReference>
<dbReference type="HOGENOM" id="CLU_072226_1_1_3"/>
<dbReference type="Proteomes" id="UP000001422">
    <property type="component" value="Chromosome"/>
</dbReference>
<dbReference type="GO" id="GO:0015935">
    <property type="term" value="C:small ribosomal subunit"/>
    <property type="evidence" value="ECO:0007669"/>
    <property type="project" value="InterPro"/>
</dbReference>
<dbReference type="GO" id="GO:0019843">
    <property type="term" value="F:rRNA binding"/>
    <property type="evidence" value="ECO:0007669"/>
    <property type="project" value="UniProtKB-UniRule"/>
</dbReference>
<dbReference type="GO" id="GO:0003735">
    <property type="term" value="F:structural constituent of ribosome"/>
    <property type="evidence" value="ECO:0007669"/>
    <property type="project" value="InterPro"/>
</dbReference>
<dbReference type="GO" id="GO:0000049">
    <property type="term" value="F:tRNA binding"/>
    <property type="evidence" value="ECO:0007669"/>
    <property type="project" value="UniProtKB-UniRule"/>
</dbReference>
<dbReference type="GO" id="GO:0006412">
    <property type="term" value="P:translation"/>
    <property type="evidence" value="ECO:0007669"/>
    <property type="project" value="UniProtKB-UniRule"/>
</dbReference>
<dbReference type="CDD" id="cd14869">
    <property type="entry name" value="uS7_Bacteria"/>
    <property type="match status" value="1"/>
</dbReference>
<dbReference type="FunFam" id="1.10.455.10:FF:000001">
    <property type="entry name" value="30S ribosomal protein S7"/>
    <property type="match status" value="1"/>
</dbReference>
<dbReference type="Gene3D" id="1.10.455.10">
    <property type="entry name" value="Ribosomal protein S7 domain"/>
    <property type="match status" value="1"/>
</dbReference>
<dbReference type="HAMAP" id="MF_00480_B">
    <property type="entry name" value="Ribosomal_uS7_B"/>
    <property type="match status" value="1"/>
</dbReference>
<dbReference type="InterPro" id="IPR000235">
    <property type="entry name" value="Ribosomal_uS7"/>
</dbReference>
<dbReference type="InterPro" id="IPR005717">
    <property type="entry name" value="Ribosomal_uS7_bac/org-type"/>
</dbReference>
<dbReference type="InterPro" id="IPR020606">
    <property type="entry name" value="Ribosomal_uS7_CS"/>
</dbReference>
<dbReference type="InterPro" id="IPR023798">
    <property type="entry name" value="Ribosomal_uS7_dom"/>
</dbReference>
<dbReference type="InterPro" id="IPR036823">
    <property type="entry name" value="Ribosomal_uS7_dom_sf"/>
</dbReference>
<dbReference type="NCBIfam" id="TIGR01029">
    <property type="entry name" value="rpsG_bact"/>
    <property type="match status" value="1"/>
</dbReference>
<dbReference type="PANTHER" id="PTHR11205">
    <property type="entry name" value="RIBOSOMAL PROTEIN S7"/>
    <property type="match status" value="1"/>
</dbReference>
<dbReference type="Pfam" id="PF00177">
    <property type="entry name" value="Ribosomal_S7"/>
    <property type="match status" value="1"/>
</dbReference>
<dbReference type="PIRSF" id="PIRSF002122">
    <property type="entry name" value="RPS7p_RPS7a_RPS5e_RPS7o"/>
    <property type="match status" value="1"/>
</dbReference>
<dbReference type="SUPFAM" id="SSF47973">
    <property type="entry name" value="Ribosomal protein S7"/>
    <property type="match status" value="1"/>
</dbReference>
<dbReference type="PROSITE" id="PS00052">
    <property type="entry name" value="RIBOSOMAL_S7"/>
    <property type="match status" value="1"/>
</dbReference>
<evidence type="ECO:0000255" key="1">
    <source>
        <dbReference type="HAMAP-Rule" id="MF_00480"/>
    </source>
</evidence>
<evidence type="ECO:0000305" key="2"/>
<comment type="function">
    <text evidence="1">One of the primary rRNA binding proteins, it binds directly to 16S rRNA where it nucleates assembly of the head domain of the 30S subunit. Is located at the subunit interface close to the decoding center, probably blocks exit of the E-site tRNA.</text>
</comment>
<comment type="subunit">
    <text evidence="1">Part of the 30S ribosomal subunit. Contacts proteins S9 and S11.</text>
</comment>
<comment type="similarity">
    <text evidence="1">Belongs to the universal ribosomal protein uS7 family.</text>
</comment>
<accession>Q7U4D3</accession>
<keyword id="KW-0687">Ribonucleoprotein</keyword>
<keyword id="KW-0689">Ribosomal protein</keyword>
<keyword id="KW-0694">RNA-binding</keyword>
<keyword id="KW-0699">rRNA-binding</keyword>
<keyword id="KW-0820">tRNA-binding</keyword>
<gene>
    <name evidence="1" type="primary">rpsG</name>
    <name evidence="1" type="synonym">rps7</name>
    <name type="ordered locus">SYNW2136</name>
</gene>
<proteinExistence type="inferred from homology"/>
<feature type="chain" id="PRO_0000124365" description="Small ribosomal subunit protein uS7">
    <location>
        <begin position="1"/>
        <end position="156"/>
    </location>
</feature>
<protein>
    <recommendedName>
        <fullName evidence="1">Small ribosomal subunit protein uS7</fullName>
    </recommendedName>
    <alternativeName>
        <fullName evidence="2">30S ribosomal protein S7</fullName>
    </alternativeName>
</protein>